<comment type="function">
    <text evidence="1">Inactivates MAPK1 and MAPK3 which leads to dephosphorylation of heat shock factor protein 4 and a reduction in its DNA-binding activity.</text>
</comment>
<comment type="catalytic activity">
    <reaction evidence="3">
        <text>O-phospho-L-tyrosyl-[protein] + H2O = L-tyrosyl-[protein] + phosphate</text>
        <dbReference type="Rhea" id="RHEA:10684"/>
        <dbReference type="Rhea" id="RHEA-COMP:10136"/>
        <dbReference type="Rhea" id="RHEA-COMP:20101"/>
        <dbReference type="ChEBI" id="CHEBI:15377"/>
        <dbReference type="ChEBI" id="CHEBI:43474"/>
        <dbReference type="ChEBI" id="CHEBI:46858"/>
        <dbReference type="ChEBI" id="CHEBI:61978"/>
        <dbReference type="EC" id="3.1.3.48"/>
    </reaction>
</comment>
<comment type="catalytic activity">
    <reaction>
        <text>O-phospho-L-seryl-[protein] + H2O = L-seryl-[protein] + phosphate</text>
        <dbReference type="Rhea" id="RHEA:20629"/>
        <dbReference type="Rhea" id="RHEA-COMP:9863"/>
        <dbReference type="Rhea" id="RHEA-COMP:11604"/>
        <dbReference type="ChEBI" id="CHEBI:15377"/>
        <dbReference type="ChEBI" id="CHEBI:29999"/>
        <dbReference type="ChEBI" id="CHEBI:43474"/>
        <dbReference type="ChEBI" id="CHEBI:83421"/>
        <dbReference type="EC" id="3.1.3.16"/>
    </reaction>
</comment>
<comment type="catalytic activity">
    <reaction>
        <text>O-phospho-L-threonyl-[protein] + H2O = L-threonyl-[protein] + phosphate</text>
        <dbReference type="Rhea" id="RHEA:47004"/>
        <dbReference type="Rhea" id="RHEA-COMP:11060"/>
        <dbReference type="Rhea" id="RHEA-COMP:11605"/>
        <dbReference type="ChEBI" id="CHEBI:15377"/>
        <dbReference type="ChEBI" id="CHEBI:30013"/>
        <dbReference type="ChEBI" id="CHEBI:43474"/>
        <dbReference type="ChEBI" id="CHEBI:61977"/>
        <dbReference type="EC" id="3.1.3.16"/>
    </reaction>
</comment>
<comment type="subunit">
    <text evidence="1">Interacts with HSF4.</text>
</comment>
<comment type="subcellular location">
    <subcellularLocation>
        <location evidence="1">Cytoplasm</location>
    </subcellularLocation>
    <subcellularLocation>
        <location evidence="1">Nucleus</location>
    </subcellularLocation>
    <subcellularLocation>
        <location evidence="1">Golgi apparatus</location>
    </subcellularLocation>
</comment>
<comment type="tissue specificity">
    <text evidence="4 5">Brain and skeletal muscle. In the brain it is expressed ubiquitously except in the hippocampus.</text>
</comment>
<comment type="similarity">
    <text evidence="6">Belongs to the protein-tyrosine phosphatase family. Non-receptor class dual specificity subfamily.</text>
</comment>
<proteinExistence type="evidence at transcript level"/>
<organism>
    <name type="scientific">Mus musculus</name>
    <name type="common">Mouse</name>
    <dbReference type="NCBI Taxonomy" id="10090"/>
    <lineage>
        <taxon>Eukaryota</taxon>
        <taxon>Metazoa</taxon>
        <taxon>Chordata</taxon>
        <taxon>Craniata</taxon>
        <taxon>Vertebrata</taxon>
        <taxon>Euteleostomi</taxon>
        <taxon>Mammalia</taxon>
        <taxon>Eutheria</taxon>
        <taxon>Euarchontoglires</taxon>
        <taxon>Glires</taxon>
        <taxon>Rodentia</taxon>
        <taxon>Myomorpha</taxon>
        <taxon>Muroidea</taxon>
        <taxon>Muridae</taxon>
        <taxon>Murinae</taxon>
        <taxon>Mus</taxon>
        <taxon>Mus</taxon>
    </lineage>
</organism>
<name>DUS26_MOUSE</name>
<sequence length="211" mass="23946">MCPGNWLWASMTFMARFSRGSSRSPVRTRGSLEEMPSVHHPFLNVFELERLLYTGKTACNHADEVWPGLYLGDQDMANNRRELRRLGITHVLNASHNRWRGTPEAYEGLGIRYLGVEAHDSPAFDMSIHFQTAADFIHRALSQPGGKILVHCAVGVSRSATLVLAYLMLYHHFTLVEAIKKVKDHRGITPNRGFLRQLLALDRRLRQGLEA</sequence>
<feature type="chain" id="PRO_0000292220" description="Dual specificity protein phosphatase 26">
    <location>
        <begin position="1"/>
        <end position="211"/>
    </location>
</feature>
<feature type="domain" description="Tyrosine-protein phosphatase" evidence="2">
    <location>
        <begin position="60"/>
        <end position="207"/>
    </location>
</feature>
<feature type="active site" description="Phosphocysteine intermediate" evidence="2">
    <location>
        <position position="152"/>
    </location>
</feature>
<reference key="1">
    <citation type="submission" date="2003-02" db="EMBL/GenBank/DDBJ databases">
        <title>Identification of a novel dual specificity phosphatase, SKRP3.</title>
        <authorList>
            <person name="Zama T."/>
            <person name="Aoki R."/>
            <person name="Murata M."/>
            <person name="Ikeda Y."/>
        </authorList>
    </citation>
    <scope>NUCLEOTIDE SEQUENCE [MRNA]</scope>
</reference>
<reference key="2">
    <citation type="journal article" date="2005" name="Science">
        <title>The transcriptional landscape of the mammalian genome.</title>
        <authorList>
            <person name="Carninci P."/>
            <person name="Kasukawa T."/>
            <person name="Katayama S."/>
            <person name="Gough J."/>
            <person name="Frith M.C."/>
            <person name="Maeda N."/>
            <person name="Oyama R."/>
            <person name="Ravasi T."/>
            <person name="Lenhard B."/>
            <person name="Wells C."/>
            <person name="Kodzius R."/>
            <person name="Shimokawa K."/>
            <person name="Bajic V.B."/>
            <person name="Brenner S.E."/>
            <person name="Batalov S."/>
            <person name="Forrest A.R."/>
            <person name="Zavolan M."/>
            <person name="Davis M.J."/>
            <person name="Wilming L.G."/>
            <person name="Aidinis V."/>
            <person name="Allen J.E."/>
            <person name="Ambesi-Impiombato A."/>
            <person name="Apweiler R."/>
            <person name="Aturaliya R.N."/>
            <person name="Bailey T.L."/>
            <person name="Bansal M."/>
            <person name="Baxter L."/>
            <person name="Beisel K.W."/>
            <person name="Bersano T."/>
            <person name="Bono H."/>
            <person name="Chalk A.M."/>
            <person name="Chiu K.P."/>
            <person name="Choudhary V."/>
            <person name="Christoffels A."/>
            <person name="Clutterbuck D.R."/>
            <person name="Crowe M.L."/>
            <person name="Dalla E."/>
            <person name="Dalrymple B.P."/>
            <person name="de Bono B."/>
            <person name="Della Gatta G."/>
            <person name="di Bernardo D."/>
            <person name="Down T."/>
            <person name="Engstrom P."/>
            <person name="Fagiolini M."/>
            <person name="Faulkner G."/>
            <person name="Fletcher C.F."/>
            <person name="Fukushima T."/>
            <person name="Furuno M."/>
            <person name="Futaki S."/>
            <person name="Gariboldi M."/>
            <person name="Georgii-Hemming P."/>
            <person name="Gingeras T.R."/>
            <person name="Gojobori T."/>
            <person name="Green R.E."/>
            <person name="Gustincich S."/>
            <person name="Harbers M."/>
            <person name="Hayashi Y."/>
            <person name="Hensch T.K."/>
            <person name="Hirokawa N."/>
            <person name="Hill D."/>
            <person name="Huminiecki L."/>
            <person name="Iacono M."/>
            <person name="Ikeo K."/>
            <person name="Iwama A."/>
            <person name="Ishikawa T."/>
            <person name="Jakt M."/>
            <person name="Kanapin A."/>
            <person name="Katoh M."/>
            <person name="Kawasawa Y."/>
            <person name="Kelso J."/>
            <person name="Kitamura H."/>
            <person name="Kitano H."/>
            <person name="Kollias G."/>
            <person name="Krishnan S.P."/>
            <person name="Kruger A."/>
            <person name="Kummerfeld S.K."/>
            <person name="Kurochkin I.V."/>
            <person name="Lareau L.F."/>
            <person name="Lazarevic D."/>
            <person name="Lipovich L."/>
            <person name="Liu J."/>
            <person name="Liuni S."/>
            <person name="McWilliam S."/>
            <person name="Madan Babu M."/>
            <person name="Madera M."/>
            <person name="Marchionni L."/>
            <person name="Matsuda H."/>
            <person name="Matsuzawa S."/>
            <person name="Miki H."/>
            <person name="Mignone F."/>
            <person name="Miyake S."/>
            <person name="Morris K."/>
            <person name="Mottagui-Tabar S."/>
            <person name="Mulder N."/>
            <person name="Nakano N."/>
            <person name="Nakauchi H."/>
            <person name="Ng P."/>
            <person name="Nilsson R."/>
            <person name="Nishiguchi S."/>
            <person name="Nishikawa S."/>
            <person name="Nori F."/>
            <person name="Ohara O."/>
            <person name="Okazaki Y."/>
            <person name="Orlando V."/>
            <person name="Pang K.C."/>
            <person name="Pavan W.J."/>
            <person name="Pavesi G."/>
            <person name="Pesole G."/>
            <person name="Petrovsky N."/>
            <person name="Piazza S."/>
            <person name="Reed J."/>
            <person name="Reid J.F."/>
            <person name="Ring B.Z."/>
            <person name="Ringwald M."/>
            <person name="Rost B."/>
            <person name="Ruan Y."/>
            <person name="Salzberg S.L."/>
            <person name="Sandelin A."/>
            <person name="Schneider C."/>
            <person name="Schoenbach C."/>
            <person name="Sekiguchi K."/>
            <person name="Semple C.A."/>
            <person name="Seno S."/>
            <person name="Sessa L."/>
            <person name="Sheng Y."/>
            <person name="Shibata Y."/>
            <person name="Shimada H."/>
            <person name="Shimada K."/>
            <person name="Silva D."/>
            <person name="Sinclair B."/>
            <person name="Sperling S."/>
            <person name="Stupka E."/>
            <person name="Sugiura K."/>
            <person name="Sultana R."/>
            <person name="Takenaka Y."/>
            <person name="Taki K."/>
            <person name="Tammoja K."/>
            <person name="Tan S.L."/>
            <person name="Tang S."/>
            <person name="Taylor M.S."/>
            <person name="Tegner J."/>
            <person name="Teichmann S.A."/>
            <person name="Ueda H.R."/>
            <person name="van Nimwegen E."/>
            <person name="Verardo R."/>
            <person name="Wei C.L."/>
            <person name="Yagi K."/>
            <person name="Yamanishi H."/>
            <person name="Zabarovsky E."/>
            <person name="Zhu S."/>
            <person name="Zimmer A."/>
            <person name="Hide W."/>
            <person name="Bult C."/>
            <person name="Grimmond S.M."/>
            <person name="Teasdale R.D."/>
            <person name="Liu E.T."/>
            <person name="Brusic V."/>
            <person name="Quackenbush J."/>
            <person name="Wahlestedt C."/>
            <person name="Mattick J.S."/>
            <person name="Hume D.A."/>
            <person name="Kai C."/>
            <person name="Sasaki D."/>
            <person name="Tomaru Y."/>
            <person name="Fukuda S."/>
            <person name="Kanamori-Katayama M."/>
            <person name="Suzuki M."/>
            <person name="Aoki J."/>
            <person name="Arakawa T."/>
            <person name="Iida J."/>
            <person name="Imamura K."/>
            <person name="Itoh M."/>
            <person name="Kato T."/>
            <person name="Kawaji H."/>
            <person name="Kawagashira N."/>
            <person name="Kawashima T."/>
            <person name="Kojima M."/>
            <person name="Kondo S."/>
            <person name="Konno H."/>
            <person name="Nakano K."/>
            <person name="Ninomiya N."/>
            <person name="Nishio T."/>
            <person name="Okada M."/>
            <person name="Plessy C."/>
            <person name="Shibata K."/>
            <person name="Shiraki T."/>
            <person name="Suzuki S."/>
            <person name="Tagami M."/>
            <person name="Waki K."/>
            <person name="Watahiki A."/>
            <person name="Okamura-Oho Y."/>
            <person name="Suzuki H."/>
            <person name="Kawai J."/>
            <person name="Hayashizaki Y."/>
        </authorList>
    </citation>
    <scope>NUCLEOTIDE SEQUENCE [LARGE SCALE MRNA]</scope>
    <source>
        <strain>C57BL/6J</strain>
        <tissue>Tongue</tissue>
    </source>
</reference>
<reference key="3">
    <citation type="journal article" date="2004" name="Genome Res.">
        <title>The status, quality, and expansion of the NIH full-length cDNA project: the Mammalian Gene Collection (MGC).</title>
        <authorList>
            <consortium name="The MGC Project Team"/>
        </authorList>
    </citation>
    <scope>NUCLEOTIDE SEQUENCE [LARGE SCALE MRNA]</scope>
    <source>
        <tissue>Mammary tumor</tissue>
    </source>
</reference>
<reference key="4">
    <citation type="journal article" date="2006" name="Mol. Cell. Biol.">
        <title>Association and regulation of heat shock transcription factor 4b with both extracellular signal-regulated kinase mitogen-activated protein kinase and dual-specificity tyrosine phosphatase DUSP26.</title>
        <authorList>
            <person name="Hu Y."/>
            <person name="Mivechi N.F."/>
        </authorList>
    </citation>
    <scope>TISSUE SPECIFICITY</scope>
</reference>
<reference key="5">
    <citation type="journal article" date="2007" name="Mol. Cell. Biochem.">
        <title>Characterization of a novel low-molecular-mass dual specificity phosphatase-4 (LDP-4) expressed in brain.</title>
        <authorList>
            <person name="Takagaki K."/>
            <person name="Shima H."/>
            <person name="Tanuma N."/>
            <person name="Nomura M."/>
            <person name="Satoh T."/>
            <person name="Watanabe M."/>
            <person name="Kikuchi K."/>
        </authorList>
    </citation>
    <scope>TISSUE SPECIFICITY</scope>
</reference>
<gene>
    <name type="primary">Dusp26</name>
    <name type="synonym">Skrp3</name>
</gene>
<keyword id="KW-0963">Cytoplasm</keyword>
<keyword id="KW-0333">Golgi apparatus</keyword>
<keyword id="KW-0378">Hydrolase</keyword>
<keyword id="KW-0539">Nucleus</keyword>
<keyword id="KW-0904">Protein phosphatase</keyword>
<keyword id="KW-1185">Reference proteome</keyword>
<accession>Q9D700</accession>
<accession>Q8VCZ5</accession>
<evidence type="ECO:0000250" key="1"/>
<evidence type="ECO:0000255" key="2">
    <source>
        <dbReference type="PROSITE-ProRule" id="PRU00160"/>
    </source>
</evidence>
<evidence type="ECO:0000255" key="3">
    <source>
        <dbReference type="PROSITE-ProRule" id="PRU10044"/>
    </source>
</evidence>
<evidence type="ECO:0000269" key="4">
    <source>
    </source>
</evidence>
<evidence type="ECO:0000269" key="5">
    <source>
    </source>
</evidence>
<evidence type="ECO:0000305" key="6"/>
<dbReference type="EC" id="3.1.3.16"/>
<dbReference type="EC" id="3.1.3.48"/>
<dbReference type="EMBL" id="AB104416">
    <property type="protein sequence ID" value="BAD91016.1"/>
    <property type="molecule type" value="mRNA"/>
</dbReference>
<dbReference type="EMBL" id="AK009781">
    <property type="protein sequence ID" value="BAB26501.2"/>
    <property type="molecule type" value="mRNA"/>
</dbReference>
<dbReference type="EMBL" id="BC018204">
    <property type="protein sequence ID" value="AAH18204.1"/>
    <property type="molecule type" value="mRNA"/>
</dbReference>
<dbReference type="CCDS" id="CCDS22219.1"/>
<dbReference type="RefSeq" id="NP_001344152.1">
    <property type="nucleotide sequence ID" value="NM_001357223.1"/>
</dbReference>
<dbReference type="RefSeq" id="NP_080145.1">
    <property type="nucleotide sequence ID" value="NM_025869.4"/>
</dbReference>
<dbReference type="RefSeq" id="XP_017168431.1">
    <property type="nucleotide sequence ID" value="XM_017312942.1"/>
</dbReference>
<dbReference type="SMR" id="Q9D700"/>
<dbReference type="BioGRID" id="211836">
    <property type="interactions" value="2"/>
</dbReference>
<dbReference type="FunCoup" id="Q9D700">
    <property type="interactions" value="754"/>
</dbReference>
<dbReference type="STRING" id="10090.ENSMUSP00000046794"/>
<dbReference type="PhosphoSitePlus" id="Q9D700"/>
<dbReference type="SwissPalm" id="Q9D700"/>
<dbReference type="PaxDb" id="10090-ENSMUSP00000046794"/>
<dbReference type="ProteomicsDB" id="277610"/>
<dbReference type="Antibodypedia" id="10741">
    <property type="antibodies" value="215 antibodies from 31 providers"/>
</dbReference>
<dbReference type="DNASU" id="66959"/>
<dbReference type="Ensembl" id="ENSMUST00000036631.14">
    <property type="protein sequence ID" value="ENSMUSP00000046794.8"/>
    <property type="gene ID" value="ENSMUSG00000039661.15"/>
</dbReference>
<dbReference type="Ensembl" id="ENSMUST00000161713.2">
    <property type="protein sequence ID" value="ENSMUSP00000124949.2"/>
    <property type="gene ID" value="ENSMUSG00000039661.15"/>
</dbReference>
<dbReference type="Ensembl" id="ENSMUST00000170204.8">
    <property type="protein sequence ID" value="ENSMUSP00000126397.2"/>
    <property type="gene ID" value="ENSMUSG00000039661.15"/>
</dbReference>
<dbReference type="GeneID" id="66959"/>
<dbReference type="KEGG" id="mmu:66959"/>
<dbReference type="UCSC" id="uc009ljb.1">
    <property type="organism name" value="mouse"/>
</dbReference>
<dbReference type="AGR" id="MGI:1914209"/>
<dbReference type="CTD" id="78986"/>
<dbReference type="MGI" id="MGI:1914209">
    <property type="gene designation" value="Dusp26"/>
</dbReference>
<dbReference type="VEuPathDB" id="HostDB:ENSMUSG00000039661"/>
<dbReference type="eggNOG" id="KOG1716">
    <property type="taxonomic scope" value="Eukaryota"/>
</dbReference>
<dbReference type="GeneTree" id="ENSGT00940000158107"/>
<dbReference type="HOGENOM" id="CLU_027074_11_3_1"/>
<dbReference type="InParanoid" id="Q9D700"/>
<dbReference type="OMA" id="MSIHFQA"/>
<dbReference type="OrthoDB" id="2017893at2759"/>
<dbReference type="PhylomeDB" id="Q9D700"/>
<dbReference type="TreeFam" id="TF105128"/>
<dbReference type="BioGRID-ORCS" id="66959">
    <property type="hits" value="4 hits in 77 CRISPR screens"/>
</dbReference>
<dbReference type="ChiTaRS" id="Dusp26">
    <property type="organism name" value="mouse"/>
</dbReference>
<dbReference type="PRO" id="PR:Q9D700"/>
<dbReference type="Proteomes" id="UP000000589">
    <property type="component" value="Chromosome 8"/>
</dbReference>
<dbReference type="RNAct" id="Q9D700">
    <property type="molecule type" value="protein"/>
</dbReference>
<dbReference type="Bgee" id="ENSMUSG00000039661">
    <property type="expression patterns" value="Expressed in superior cervical ganglion and 202 other cell types or tissues"/>
</dbReference>
<dbReference type="GO" id="GO:0005737">
    <property type="term" value="C:cytoplasm"/>
    <property type="evidence" value="ECO:0000250"/>
    <property type="project" value="MGI"/>
</dbReference>
<dbReference type="GO" id="GO:0005794">
    <property type="term" value="C:Golgi apparatus"/>
    <property type="evidence" value="ECO:0007669"/>
    <property type="project" value="UniProtKB-SubCell"/>
</dbReference>
<dbReference type="GO" id="GO:0005739">
    <property type="term" value="C:mitochondrion"/>
    <property type="evidence" value="ECO:0007005"/>
    <property type="project" value="MGI"/>
</dbReference>
<dbReference type="GO" id="GO:0005654">
    <property type="term" value="C:nucleoplasm"/>
    <property type="evidence" value="ECO:0007669"/>
    <property type="project" value="Ensembl"/>
</dbReference>
<dbReference type="GO" id="GO:0005634">
    <property type="term" value="C:nucleus"/>
    <property type="evidence" value="ECO:0000250"/>
    <property type="project" value="MGI"/>
</dbReference>
<dbReference type="GO" id="GO:0002039">
    <property type="term" value="F:p53 binding"/>
    <property type="evidence" value="ECO:0007669"/>
    <property type="project" value="Ensembl"/>
</dbReference>
<dbReference type="GO" id="GO:0004722">
    <property type="term" value="F:protein serine/threonine phosphatase activity"/>
    <property type="evidence" value="ECO:0007669"/>
    <property type="project" value="UniProtKB-EC"/>
</dbReference>
<dbReference type="GO" id="GO:0004725">
    <property type="term" value="F:protein tyrosine phosphatase activity"/>
    <property type="evidence" value="ECO:0007669"/>
    <property type="project" value="UniProtKB-EC"/>
</dbReference>
<dbReference type="GO" id="GO:0008138">
    <property type="term" value="F:protein tyrosine/serine/threonine phosphatase activity"/>
    <property type="evidence" value="ECO:0007669"/>
    <property type="project" value="Ensembl"/>
</dbReference>
<dbReference type="GO" id="GO:0061629">
    <property type="term" value="F:RNA polymerase II-specific DNA-binding transcription factor binding"/>
    <property type="evidence" value="ECO:0007669"/>
    <property type="project" value="Ensembl"/>
</dbReference>
<dbReference type="GO" id="GO:0070373">
    <property type="term" value="P:negative regulation of ERK1 and ERK2 cascade"/>
    <property type="evidence" value="ECO:0007669"/>
    <property type="project" value="Ensembl"/>
</dbReference>
<dbReference type="GO" id="GO:0000122">
    <property type="term" value="P:negative regulation of transcription by RNA polymerase II"/>
    <property type="evidence" value="ECO:0007669"/>
    <property type="project" value="Ensembl"/>
</dbReference>
<dbReference type="GO" id="GO:0045785">
    <property type="term" value="P:positive regulation of cell adhesion"/>
    <property type="evidence" value="ECO:0007669"/>
    <property type="project" value="Ensembl"/>
</dbReference>
<dbReference type="CDD" id="cd14578">
    <property type="entry name" value="DUSP26"/>
    <property type="match status" value="1"/>
</dbReference>
<dbReference type="FunFam" id="3.90.190.10:FF:000037">
    <property type="entry name" value="dual specificity protein phosphatase 26"/>
    <property type="match status" value="1"/>
</dbReference>
<dbReference type="Gene3D" id="3.90.190.10">
    <property type="entry name" value="Protein tyrosine phosphatase superfamily"/>
    <property type="match status" value="1"/>
</dbReference>
<dbReference type="InterPro" id="IPR020405">
    <property type="entry name" value="Atypical_DUSP_subfamA"/>
</dbReference>
<dbReference type="InterPro" id="IPR000340">
    <property type="entry name" value="Dual-sp_phosphatase_cat-dom"/>
</dbReference>
<dbReference type="InterPro" id="IPR029021">
    <property type="entry name" value="Prot-tyrosine_phosphatase-like"/>
</dbReference>
<dbReference type="InterPro" id="IPR016130">
    <property type="entry name" value="Tyr_Pase_AS"/>
</dbReference>
<dbReference type="InterPro" id="IPR000387">
    <property type="entry name" value="Tyr_Pase_dom"/>
</dbReference>
<dbReference type="InterPro" id="IPR020422">
    <property type="entry name" value="TYR_PHOSPHATASE_DUAL_dom"/>
</dbReference>
<dbReference type="PANTHER" id="PTHR45682">
    <property type="entry name" value="AGAP008228-PA"/>
    <property type="match status" value="1"/>
</dbReference>
<dbReference type="PANTHER" id="PTHR45682:SF8">
    <property type="entry name" value="DUAL SPECIFICITY PROTEIN PHOSPHATASE 26"/>
    <property type="match status" value="1"/>
</dbReference>
<dbReference type="Pfam" id="PF00782">
    <property type="entry name" value="DSPc"/>
    <property type="match status" value="1"/>
</dbReference>
<dbReference type="PRINTS" id="PR01908">
    <property type="entry name" value="ADSPHPHTASE"/>
</dbReference>
<dbReference type="PRINTS" id="PR01909">
    <property type="entry name" value="ADSPHPHTASEA"/>
</dbReference>
<dbReference type="SMART" id="SM00195">
    <property type="entry name" value="DSPc"/>
    <property type="match status" value="1"/>
</dbReference>
<dbReference type="SUPFAM" id="SSF52799">
    <property type="entry name" value="(Phosphotyrosine protein) phosphatases II"/>
    <property type="match status" value="1"/>
</dbReference>
<dbReference type="PROSITE" id="PS00383">
    <property type="entry name" value="TYR_PHOSPHATASE_1"/>
    <property type="match status" value="1"/>
</dbReference>
<dbReference type="PROSITE" id="PS50056">
    <property type="entry name" value="TYR_PHOSPHATASE_2"/>
    <property type="match status" value="1"/>
</dbReference>
<dbReference type="PROSITE" id="PS50054">
    <property type="entry name" value="TYR_PHOSPHATASE_DUAL"/>
    <property type="match status" value="1"/>
</dbReference>
<protein>
    <recommendedName>
        <fullName>Dual specificity protein phosphatase 26</fullName>
        <ecNumber>3.1.3.16</ecNumber>
        <ecNumber>3.1.3.48</ecNumber>
    </recommendedName>
    <alternativeName>
        <fullName>Dual specificity phosphatase SKRP3</fullName>
    </alternativeName>
</protein>